<evidence type="ECO:0000255" key="1">
    <source>
        <dbReference type="HAMAP-Rule" id="MF_00230"/>
    </source>
</evidence>
<reference key="1">
    <citation type="journal article" date="2011" name="Proc. Natl. Acad. Sci. U.S.A.">
        <title>Genomic anatomy of Escherichia coli O157:H7 outbreaks.</title>
        <authorList>
            <person name="Eppinger M."/>
            <person name="Mammel M.K."/>
            <person name="Leclerc J.E."/>
            <person name="Ravel J."/>
            <person name="Cebula T.A."/>
        </authorList>
    </citation>
    <scope>NUCLEOTIDE SEQUENCE [LARGE SCALE GENOMIC DNA]</scope>
    <source>
        <strain>EC4115 / EHEC</strain>
    </source>
</reference>
<gene>
    <name evidence="1" type="primary">cobT</name>
    <name type="ordered locus">ECH74115_2836</name>
</gene>
<feature type="chain" id="PRO_1000100462" description="Nicotinate-nucleotide--dimethylbenzimidazole phosphoribosyltransferase">
    <location>
        <begin position="1"/>
        <end position="359"/>
    </location>
</feature>
<feature type="active site" description="Proton acceptor" evidence="1">
    <location>
        <position position="318"/>
    </location>
</feature>
<keyword id="KW-0169">Cobalamin biosynthesis</keyword>
<keyword id="KW-0328">Glycosyltransferase</keyword>
<keyword id="KW-0808">Transferase</keyword>
<proteinExistence type="inferred from homology"/>
<dbReference type="EC" id="2.4.2.21" evidence="1"/>
<dbReference type="EMBL" id="CP001164">
    <property type="protein sequence ID" value="ACI39058.1"/>
    <property type="molecule type" value="Genomic_DNA"/>
</dbReference>
<dbReference type="RefSeq" id="WP_001193830.1">
    <property type="nucleotide sequence ID" value="NC_011353.1"/>
</dbReference>
<dbReference type="SMR" id="B5YSS0"/>
<dbReference type="KEGG" id="ecf:ECH74115_2836"/>
<dbReference type="HOGENOM" id="CLU_002982_0_0_6"/>
<dbReference type="UniPathway" id="UPA00061">
    <property type="reaction ID" value="UER00516"/>
</dbReference>
<dbReference type="GO" id="GO:0008939">
    <property type="term" value="F:nicotinate-nucleotide-dimethylbenzimidazole phosphoribosyltransferase activity"/>
    <property type="evidence" value="ECO:0007669"/>
    <property type="project" value="UniProtKB-UniRule"/>
</dbReference>
<dbReference type="GO" id="GO:0009236">
    <property type="term" value="P:cobalamin biosynthetic process"/>
    <property type="evidence" value="ECO:0007669"/>
    <property type="project" value="UniProtKB-KW"/>
</dbReference>
<dbReference type="CDD" id="cd02439">
    <property type="entry name" value="DMB-PRT_CobT"/>
    <property type="match status" value="1"/>
</dbReference>
<dbReference type="FunFam" id="1.10.1610.10:FF:000001">
    <property type="entry name" value="Nicotinate-nucleotide--dimethylbenzimidazole phosphoribosyltransferase"/>
    <property type="match status" value="1"/>
</dbReference>
<dbReference type="FunFam" id="3.40.50.10210:FF:000001">
    <property type="entry name" value="Nicotinate-nucleotide--dimethylbenzimidazole phosphoribosyltransferase"/>
    <property type="match status" value="1"/>
</dbReference>
<dbReference type="Gene3D" id="1.10.1610.10">
    <property type="match status" value="1"/>
</dbReference>
<dbReference type="Gene3D" id="3.40.50.10210">
    <property type="match status" value="1"/>
</dbReference>
<dbReference type="HAMAP" id="MF_00230">
    <property type="entry name" value="CobT"/>
    <property type="match status" value="1"/>
</dbReference>
<dbReference type="InterPro" id="IPR003200">
    <property type="entry name" value="Nict_dMeBzImd_PRibTrfase"/>
</dbReference>
<dbReference type="InterPro" id="IPR017846">
    <property type="entry name" value="Nict_dMeBzImd_PRibTrfase_bact"/>
</dbReference>
<dbReference type="InterPro" id="IPR023195">
    <property type="entry name" value="Nict_dMeBzImd_PRibTrfase_N"/>
</dbReference>
<dbReference type="InterPro" id="IPR036087">
    <property type="entry name" value="Nict_dMeBzImd_PRibTrfase_sf"/>
</dbReference>
<dbReference type="NCBIfam" id="TIGR03160">
    <property type="entry name" value="cobT_DBIPRT"/>
    <property type="match status" value="1"/>
</dbReference>
<dbReference type="NCBIfam" id="NF000996">
    <property type="entry name" value="PRK00105.1"/>
    <property type="match status" value="1"/>
</dbReference>
<dbReference type="PANTHER" id="PTHR43463">
    <property type="entry name" value="NICOTINATE-NUCLEOTIDE--DIMETHYLBENZIMIDAZOLE PHOSPHORIBOSYLTRANSFERASE"/>
    <property type="match status" value="1"/>
</dbReference>
<dbReference type="PANTHER" id="PTHR43463:SF1">
    <property type="entry name" value="NICOTINATE-NUCLEOTIDE--DIMETHYLBENZIMIDAZOLE PHOSPHORIBOSYLTRANSFERASE"/>
    <property type="match status" value="1"/>
</dbReference>
<dbReference type="Pfam" id="PF02277">
    <property type="entry name" value="DBI_PRT"/>
    <property type="match status" value="1"/>
</dbReference>
<dbReference type="SUPFAM" id="SSF52733">
    <property type="entry name" value="Nicotinate mononucleotide:5,6-dimethylbenzimidazole phosphoribosyltransferase (CobT)"/>
    <property type="match status" value="1"/>
</dbReference>
<protein>
    <recommendedName>
        <fullName evidence="1">Nicotinate-nucleotide--dimethylbenzimidazole phosphoribosyltransferase</fullName>
        <shortName evidence="1">NN:DBI PRT</shortName>
        <ecNumber evidence="1">2.4.2.21</ecNumber>
    </recommendedName>
    <alternativeName>
        <fullName evidence="1">N(1)-alpha-phosphoribosyltransferase</fullName>
    </alternativeName>
</protein>
<comment type="function">
    <text evidence="1">Catalyzes the synthesis of alpha-ribazole-5'-phosphate from nicotinate mononucleotide (NAMN) and 5,6-dimethylbenzimidazole (DMB).</text>
</comment>
<comment type="catalytic activity">
    <reaction evidence="1">
        <text>5,6-dimethylbenzimidazole + nicotinate beta-D-ribonucleotide = alpha-ribazole 5'-phosphate + nicotinate + H(+)</text>
        <dbReference type="Rhea" id="RHEA:11196"/>
        <dbReference type="ChEBI" id="CHEBI:15378"/>
        <dbReference type="ChEBI" id="CHEBI:15890"/>
        <dbReference type="ChEBI" id="CHEBI:32544"/>
        <dbReference type="ChEBI" id="CHEBI:57502"/>
        <dbReference type="ChEBI" id="CHEBI:57918"/>
        <dbReference type="EC" id="2.4.2.21"/>
    </reaction>
</comment>
<comment type="pathway">
    <text evidence="1">Nucleoside biosynthesis; alpha-ribazole biosynthesis; alpha-ribazole from 5,6-dimethylbenzimidazole: step 1/2.</text>
</comment>
<comment type="subunit">
    <text evidence="1">Homodimer.</text>
</comment>
<comment type="similarity">
    <text evidence="1">Belongs to the CobT family.</text>
</comment>
<sequence length="359" mass="36897">MQTLANLLNTIPAIDPAAMSRAQRHIDGLLKPVGSLGRLEALGVQLAGMPGLNGIPHVGKKAVLVMCADHGVWEEGVAISPKEVTAIQAENMTRGTTGVCVLAAQAGANVHVIDVGIDTAEPIPGLINMRVARGSGNIASAPAMSRRQAEKLLLDVICYTRELAKNGVTLFGVGELGMANTTPAAAIVSTITGRDPEEVVGIGANLPTDKLANKIDVVRRAITLNQPNPQDGVNVLAKVGGFDLVGMAGVMLGAASCGLPVLLDGFLSYAAALAACQMSPAIKPYLIPSHLSAEKGARIALSHLGLEPFLNMDMRLGEGSGAALAMPIIEAACAIYNNMGELAASKIVLPGNTTSDLNS</sequence>
<organism>
    <name type="scientific">Escherichia coli O157:H7 (strain EC4115 / EHEC)</name>
    <dbReference type="NCBI Taxonomy" id="444450"/>
    <lineage>
        <taxon>Bacteria</taxon>
        <taxon>Pseudomonadati</taxon>
        <taxon>Pseudomonadota</taxon>
        <taxon>Gammaproteobacteria</taxon>
        <taxon>Enterobacterales</taxon>
        <taxon>Enterobacteriaceae</taxon>
        <taxon>Escherichia</taxon>
    </lineage>
</organism>
<accession>B5YSS0</accession>
<name>COBT_ECO5E</name>